<evidence type="ECO:0000250" key="1"/>
<evidence type="ECO:0000250" key="2">
    <source>
        <dbReference type="UniProtKB" id="P05106"/>
    </source>
</evidence>
<evidence type="ECO:0000250" key="3">
    <source>
        <dbReference type="UniProtKB" id="P05107"/>
    </source>
</evidence>
<evidence type="ECO:0000250" key="4">
    <source>
        <dbReference type="UniProtKB" id="P11835"/>
    </source>
</evidence>
<evidence type="ECO:0000255" key="5"/>
<evidence type="ECO:0000255" key="6">
    <source>
        <dbReference type="PROSITE-ProRule" id="PRU01392"/>
    </source>
</evidence>
<evidence type="ECO:0000305" key="7"/>
<organism>
    <name type="scientific">Ovis canadensis</name>
    <name type="common">Bighorn sheep</name>
    <dbReference type="NCBI Taxonomy" id="37174"/>
    <lineage>
        <taxon>Eukaryota</taxon>
        <taxon>Metazoa</taxon>
        <taxon>Chordata</taxon>
        <taxon>Craniata</taxon>
        <taxon>Vertebrata</taxon>
        <taxon>Euteleostomi</taxon>
        <taxon>Mammalia</taxon>
        <taxon>Eutheria</taxon>
        <taxon>Laurasiatheria</taxon>
        <taxon>Artiodactyla</taxon>
        <taxon>Ruminantia</taxon>
        <taxon>Pecora</taxon>
        <taxon>Bovidae</taxon>
        <taxon>Caprinae</taxon>
        <taxon>Ovis</taxon>
    </lineage>
</organism>
<proteinExistence type="evidence at transcript level"/>
<protein>
    <recommendedName>
        <fullName>Integrin beta-2</fullName>
    </recommendedName>
    <alternativeName>
        <fullName>Cell surface adhesion glycoproteins LFA-1/CR3/p150,95 subunit beta</fullName>
    </alternativeName>
    <alternativeName>
        <fullName>Complement receptor C3 subunit beta</fullName>
    </alternativeName>
    <cdAntigenName>CD18</cdAntigenName>
</protein>
<keyword id="KW-0106">Calcium</keyword>
<keyword id="KW-0130">Cell adhesion</keyword>
<keyword id="KW-1003">Cell membrane</keyword>
<keyword id="KW-1015">Disulfide bond</keyword>
<keyword id="KW-0245">EGF-like domain</keyword>
<keyword id="KW-0325">Glycoprotein</keyword>
<keyword id="KW-0401">Integrin</keyword>
<keyword id="KW-0460">Magnesium</keyword>
<keyword id="KW-0472">Membrane</keyword>
<keyword id="KW-0479">Metal-binding</keyword>
<keyword id="KW-0581">Phagocytosis</keyword>
<keyword id="KW-0597">Phosphoprotein</keyword>
<keyword id="KW-0873">Pyrrolidone carboxylic acid</keyword>
<keyword id="KW-0675">Receptor</keyword>
<keyword id="KW-0677">Repeat</keyword>
<keyword id="KW-0732">Signal</keyword>
<keyword id="KW-0812">Transmembrane</keyword>
<keyword id="KW-1133">Transmembrane helix</keyword>
<accession>Q2VJ42</accession>
<name>ITB2_OVICA</name>
<dbReference type="EMBL" id="DQ104444">
    <property type="protein sequence ID" value="AAZ43094.1"/>
    <property type="molecule type" value="mRNA"/>
</dbReference>
<dbReference type="SMR" id="Q2VJ42"/>
<dbReference type="GlyCosmos" id="Q2VJ42">
    <property type="glycosylation" value="5 sites, No reported glycans"/>
</dbReference>
<dbReference type="GO" id="GO:0009986">
    <property type="term" value="C:cell surface"/>
    <property type="evidence" value="ECO:0007669"/>
    <property type="project" value="TreeGrafter"/>
</dbReference>
<dbReference type="GO" id="GO:0005925">
    <property type="term" value="C:focal adhesion"/>
    <property type="evidence" value="ECO:0007669"/>
    <property type="project" value="TreeGrafter"/>
</dbReference>
<dbReference type="GO" id="GO:0008305">
    <property type="term" value="C:integrin complex"/>
    <property type="evidence" value="ECO:0007669"/>
    <property type="project" value="TreeGrafter"/>
</dbReference>
<dbReference type="GO" id="GO:0016020">
    <property type="term" value="C:membrane"/>
    <property type="evidence" value="ECO:0000250"/>
    <property type="project" value="UniProtKB"/>
</dbReference>
<dbReference type="GO" id="GO:0045121">
    <property type="term" value="C:membrane raft"/>
    <property type="evidence" value="ECO:0007669"/>
    <property type="project" value="UniProtKB-SubCell"/>
</dbReference>
<dbReference type="GO" id="GO:0001540">
    <property type="term" value="F:amyloid-beta binding"/>
    <property type="evidence" value="ECO:0007669"/>
    <property type="project" value="TreeGrafter"/>
</dbReference>
<dbReference type="GO" id="GO:0005178">
    <property type="term" value="F:integrin binding"/>
    <property type="evidence" value="ECO:0007669"/>
    <property type="project" value="TreeGrafter"/>
</dbReference>
<dbReference type="GO" id="GO:0046872">
    <property type="term" value="F:metal ion binding"/>
    <property type="evidence" value="ECO:0007669"/>
    <property type="project" value="UniProtKB-KW"/>
</dbReference>
<dbReference type="GO" id="GO:0019901">
    <property type="term" value="F:protein kinase binding"/>
    <property type="evidence" value="ECO:0007669"/>
    <property type="project" value="TreeGrafter"/>
</dbReference>
<dbReference type="GO" id="GO:0033627">
    <property type="term" value="P:cell adhesion mediated by integrin"/>
    <property type="evidence" value="ECO:0007669"/>
    <property type="project" value="TreeGrafter"/>
</dbReference>
<dbReference type="GO" id="GO:0007160">
    <property type="term" value="P:cell-matrix adhesion"/>
    <property type="evidence" value="ECO:0007669"/>
    <property type="project" value="TreeGrafter"/>
</dbReference>
<dbReference type="GO" id="GO:0071404">
    <property type="term" value="P:cellular response to low-density lipoprotein particle stimulus"/>
    <property type="evidence" value="ECO:0000250"/>
    <property type="project" value="UniProtKB"/>
</dbReference>
<dbReference type="GO" id="GO:0007229">
    <property type="term" value="P:integrin-mediated signaling pathway"/>
    <property type="evidence" value="ECO:0007669"/>
    <property type="project" value="UniProtKB-KW"/>
</dbReference>
<dbReference type="GO" id="GO:0007159">
    <property type="term" value="P:leukocyte cell-cell adhesion"/>
    <property type="evidence" value="ECO:0007669"/>
    <property type="project" value="TreeGrafter"/>
</dbReference>
<dbReference type="GO" id="GO:0030593">
    <property type="term" value="P:neutrophil chemotaxis"/>
    <property type="evidence" value="ECO:0007669"/>
    <property type="project" value="TreeGrafter"/>
</dbReference>
<dbReference type="GO" id="GO:0006909">
    <property type="term" value="P:phagocytosis"/>
    <property type="evidence" value="ECO:0007669"/>
    <property type="project" value="UniProtKB-KW"/>
</dbReference>
<dbReference type="GO" id="GO:1904996">
    <property type="term" value="P:positive regulation of leukocyte adhesion to vascular endothelial cell"/>
    <property type="evidence" value="ECO:0000250"/>
    <property type="project" value="UniProtKB"/>
</dbReference>
<dbReference type="GO" id="GO:0031623">
    <property type="term" value="P:receptor internalization"/>
    <property type="evidence" value="ECO:0000250"/>
    <property type="project" value="UniProtKB"/>
</dbReference>
<dbReference type="FunFam" id="1.20.5.100:FF:000008">
    <property type="entry name" value="Integrin beta"/>
    <property type="match status" value="1"/>
</dbReference>
<dbReference type="FunFam" id="2.10.25.10:FF:000076">
    <property type="entry name" value="Integrin beta"/>
    <property type="match status" value="1"/>
</dbReference>
<dbReference type="FunFam" id="2.10.25.10:FF:000098">
    <property type="entry name" value="Integrin beta"/>
    <property type="match status" value="1"/>
</dbReference>
<dbReference type="FunFam" id="2.10.25.10:FF:000442">
    <property type="entry name" value="Integrin beta"/>
    <property type="match status" value="1"/>
</dbReference>
<dbReference type="FunFam" id="2.60.40.1510:FF:000008">
    <property type="entry name" value="Integrin beta"/>
    <property type="match status" value="1"/>
</dbReference>
<dbReference type="FunFam" id="3.30.1680.10:FF:000012">
    <property type="entry name" value="Integrin beta"/>
    <property type="match status" value="1"/>
</dbReference>
<dbReference type="FunFam" id="3.40.50.410:FF:000002">
    <property type="entry name" value="Integrin beta"/>
    <property type="match status" value="1"/>
</dbReference>
<dbReference type="Gene3D" id="6.20.50.10">
    <property type="match status" value="1"/>
</dbReference>
<dbReference type="Gene3D" id="1.20.5.100">
    <property type="entry name" value="Cytochrome c1, transmembrane anchor, C-terminal"/>
    <property type="match status" value="1"/>
</dbReference>
<dbReference type="Gene3D" id="2.10.25.10">
    <property type="entry name" value="Laminin"/>
    <property type="match status" value="4"/>
</dbReference>
<dbReference type="Gene3D" id="3.30.1680.10">
    <property type="entry name" value="ligand-binding face of the semaphorins, domain 2"/>
    <property type="match status" value="1"/>
</dbReference>
<dbReference type="Gene3D" id="2.60.40.1510">
    <property type="entry name" value="ntegrin, alpha v. Chain A, domain 3"/>
    <property type="match status" value="1"/>
</dbReference>
<dbReference type="Gene3D" id="3.40.50.410">
    <property type="entry name" value="von Willebrand factor, type A domain"/>
    <property type="match status" value="1"/>
</dbReference>
<dbReference type="InterPro" id="IPR013111">
    <property type="entry name" value="EGF_extracell"/>
</dbReference>
<dbReference type="InterPro" id="IPR015439">
    <property type="entry name" value="Integrin_b-2_sf"/>
</dbReference>
<dbReference type="InterPro" id="IPR033760">
    <property type="entry name" value="Integrin_beta_N"/>
</dbReference>
<dbReference type="InterPro" id="IPR015812">
    <property type="entry name" value="Integrin_bsu"/>
</dbReference>
<dbReference type="InterPro" id="IPR014836">
    <property type="entry name" value="Integrin_bsu_cyt_dom"/>
</dbReference>
<dbReference type="InterPro" id="IPR012896">
    <property type="entry name" value="Integrin_bsu_tail"/>
</dbReference>
<dbReference type="InterPro" id="IPR036349">
    <property type="entry name" value="Integrin_bsu_tail_dom_sf"/>
</dbReference>
<dbReference type="InterPro" id="IPR002369">
    <property type="entry name" value="Integrin_bsu_VWA"/>
</dbReference>
<dbReference type="InterPro" id="IPR032695">
    <property type="entry name" value="Integrin_dom_sf"/>
</dbReference>
<dbReference type="InterPro" id="IPR016201">
    <property type="entry name" value="PSI"/>
</dbReference>
<dbReference type="InterPro" id="IPR036465">
    <property type="entry name" value="vWFA_dom_sf"/>
</dbReference>
<dbReference type="PANTHER" id="PTHR10082">
    <property type="entry name" value="INTEGRIN BETA SUBUNIT"/>
    <property type="match status" value="1"/>
</dbReference>
<dbReference type="PANTHER" id="PTHR10082:SF15">
    <property type="entry name" value="INTEGRIN BETA-2"/>
    <property type="match status" value="1"/>
</dbReference>
<dbReference type="Pfam" id="PF07974">
    <property type="entry name" value="EGF_2"/>
    <property type="match status" value="1"/>
</dbReference>
<dbReference type="Pfam" id="PF23105">
    <property type="entry name" value="EGF_integrin"/>
    <property type="match status" value="1"/>
</dbReference>
<dbReference type="Pfam" id="PF08725">
    <property type="entry name" value="Integrin_b_cyt"/>
    <property type="match status" value="1"/>
</dbReference>
<dbReference type="Pfam" id="PF07965">
    <property type="entry name" value="Integrin_B_tail"/>
    <property type="match status" value="1"/>
</dbReference>
<dbReference type="Pfam" id="PF00362">
    <property type="entry name" value="Integrin_beta"/>
    <property type="match status" value="1"/>
</dbReference>
<dbReference type="Pfam" id="PF17205">
    <property type="entry name" value="PSI_integrin"/>
    <property type="match status" value="1"/>
</dbReference>
<dbReference type="PIRSF" id="PIRSF002512">
    <property type="entry name" value="Integrin_B"/>
    <property type="match status" value="1"/>
</dbReference>
<dbReference type="PRINTS" id="PR01186">
    <property type="entry name" value="INTEGRINB"/>
</dbReference>
<dbReference type="SMART" id="SM00187">
    <property type="entry name" value="INB"/>
    <property type="match status" value="1"/>
</dbReference>
<dbReference type="SMART" id="SM01241">
    <property type="entry name" value="Integrin_b_cyt"/>
    <property type="match status" value="1"/>
</dbReference>
<dbReference type="SMART" id="SM01242">
    <property type="entry name" value="Integrin_B_tail"/>
    <property type="match status" value="1"/>
</dbReference>
<dbReference type="SMART" id="SM00423">
    <property type="entry name" value="PSI"/>
    <property type="match status" value="1"/>
</dbReference>
<dbReference type="SUPFAM" id="SSF57196">
    <property type="entry name" value="EGF/Laminin"/>
    <property type="match status" value="2"/>
</dbReference>
<dbReference type="SUPFAM" id="SSF69687">
    <property type="entry name" value="Integrin beta tail domain"/>
    <property type="match status" value="1"/>
</dbReference>
<dbReference type="SUPFAM" id="SSF69179">
    <property type="entry name" value="Integrin domains"/>
    <property type="match status" value="1"/>
</dbReference>
<dbReference type="SUPFAM" id="SSF103575">
    <property type="entry name" value="Plexin repeat"/>
    <property type="match status" value="1"/>
</dbReference>
<dbReference type="SUPFAM" id="SSF53300">
    <property type="entry name" value="vWA-like"/>
    <property type="match status" value="1"/>
</dbReference>
<dbReference type="PROSITE" id="PS00022">
    <property type="entry name" value="EGF_1"/>
    <property type="match status" value="2"/>
</dbReference>
<dbReference type="PROSITE" id="PS01186">
    <property type="entry name" value="EGF_2"/>
    <property type="match status" value="2"/>
</dbReference>
<dbReference type="PROSITE" id="PS00243">
    <property type="entry name" value="I_EGF_1"/>
    <property type="match status" value="3"/>
</dbReference>
<dbReference type="PROSITE" id="PS52047">
    <property type="entry name" value="I_EGF_2"/>
    <property type="match status" value="4"/>
</dbReference>
<feature type="signal peptide" evidence="1">
    <location>
        <begin position="1"/>
        <end position="22"/>
    </location>
</feature>
<feature type="chain" id="PRO_0000273710" description="Integrin beta-2">
    <location>
        <begin position="23"/>
        <end position="770"/>
    </location>
</feature>
<feature type="topological domain" description="Extracellular" evidence="5">
    <location>
        <begin position="23"/>
        <end position="701"/>
    </location>
</feature>
<feature type="transmembrane region" description="Helical" evidence="5">
    <location>
        <begin position="702"/>
        <end position="724"/>
    </location>
</feature>
<feature type="topological domain" description="Cytoplasmic" evidence="5">
    <location>
        <begin position="725"/>
        <end position="770"/>
    </location>
</feature>
<feature type="domain" description="PSI" evidence="5">
    <location>
        <begin position="24"/>
        <end position="74"/>
    </location>
</feature>
<feature type="domain" description="VWFA" evidence="2">
    <location>
        <begin position="124"/>
        <end position="363"/>
    </location>
</feature>
<feature type="domain" description="I-EGF 1" evidence="6">
    <location>
        <begin position="449"/>
        <end position="482"/>
    </location>
</feature>
<feature type="domain" description="I-EGF 2" evidence="6">
    <location>
        <begin position="483"/>
        <end position="535"/>
    </location>
</feature>
<feature type="domain" description="I-EGF 3" evidence="6">
    <location>
        <begin position="536"/>
        <end position="574"/>
    </location>
</feature>
<feature type="domain" description="I-EGF 4" evidence="6">
    <location>
        <begin position="575"/>
        <end position="613"/>
    </location>
</feature>
<feature type="short sequence motif" description="Cell attachment site" evidence="5">
    <location>
        <begin position="397"/>
        <end position="399"/>
    </location>
</feature>
<feature type="binding site" description="in MIDAS binding site" evidence="3">
    <location>
        <position position="136"/>
    </location>
    <ligand>
        <name>Mg(2+)</name>
        <dbReference type="ChEBI" id="CHEBI:18420"/>
    </ligand>
</feature>
<feature type="binding site" description="in ADMIDAS binding site" evidence="3">
    <location>
        <position position="138"/>
    </location>
    <ligand>
        <name>Ca(2+)</name>
        <dbReference type="ChEBI" id="CHEBI:29108"/>
        <label>1</label>
    </ligand>
</feature>
<feature type="binding site" description="in MIDAS binding site" evidence="3">
    <location>
        <position position="138"/>
    </location>
    <ligand>
        <name>Mg(2+)</name>
        <dbReference type="ChEBI" id="CHEBI:18420"/>
    </ligand>
</feature>
<feature type="binding site" description="in ADMIDAS binding site" evidence="3">
    <location>
        <position position="141"/>
    </location>
    <ligand>
        <name>Ca(2+)</name>
        <dbReference type="ChEBI" id="CHEBI:29108"/>
        <label>1</label>
    </ligand>
</feature>
<feature type="binding site" description="in ADMIDAS binding site" evidence="3">
    <location>
        <position position="142"/>
    </location>
    <ligand>
        <name>Ca(2+)</name>
        <dbReference type="ChEBI" id="CHEBI:29108"/>
        <label>1</label>
    </ligand>
</feature>
<feature type="binding site" description="in LIMBS binding site" evidence="3">
    <location>
        <position position="173"/>
    </location>
    <ligand>
        <name>Ca(2+)</name>
        <dbReference type="ChEBI" id="CHEBI:29108"/>
        <label>2</label>
    </ligand>
</feature>
<feature type="binding site" description="in LIMBS binding site" evidence="3">
    <location>
        <position position="229"/>
    </location>
    <ligand>
        <name>Ca(2+)</name>
        <dbReference type="ChEBI" id="CHEBI:29108"/>
        <label>2</label>
    </ligand>
</feature>
<feature type="binding site" description="in LIMBS binding site" evidence="3">
    <location>
        <position position="231"/>
    </location>
    <ligand>
        <name>Ca(2+)</name>
        <dbReference type="ChEBI" id="CHEBI:29108"/>
        <label>2</label>
    </ligand>
</feature>
<feature type="binding site" description="in LIMBS binding site" evidence="3">
    <location>
        <position position="233"/>
    </location>
    <ligand>
        <name>Ca(2+)</name>
        <dbReference type="ChEBI" id="CHEBI:29108"/>
        <label>2</label>
    </ligand>
</feature>
<feature type="binding site" description="in LIMBS binding site" evidence="3">
    <location>
        <position position="234"/>
    </location>
    <ligand>
        <name>Ca(2+)</name>
        <dbReference type="ChEBI" id="CHEBI:29108"/>
        <label>2</label>
    </ligand>
</feature>
<feature type="binding site" description="in MIDAS binding site" evidence="3">
    <location>
        <position position="234"/>
    </location>
    <ligand>
        <name>Mg(2+)</name>
        <dbReference type="ChEBI" id="CHEBI:18420"/>
    </ligand>
</feature>
<feature type="binding site" description="in ADMIDAS binding site and liganded-open conformation" evidence="3">
    <location>
        <position position="264"/>
    </location>
    <ligand>
        <name>Ca(2+)</name>
        <dbReference type="ChEBI" id="CHEBI:29108"/>
        <label>1</label>
    </ligand>
</feature>
<feature type="binding site" description="in ADMIDAS binding site and unliganded-closed conformation" evidence="3">
    <location>
        <position position="347"/>
    </location>
    <ligand>
        <name>Ca(2+)</name>
        <dbReference type="ChEBI" id="CHEBI:29108"/>
        <label>1</label>
    </ligand>
</feature>
<feature type="modified residue" description="Pyrrolidone carboxylic acid" evidence="3">
    <location>
        <position position="23"/>
    </location>
</feature>
<feature type="modified residue" description="Phosphoserine" evidence="3">
    <location>
        <position position="746"/>
    </location>
</feature>
<feature type="modified residue" description="Phosphoserine" evidence="3">
    <location>
        <position position="757"/>
    </location>
</feature>
<feature type="modified residue" description="Phosphothreonine" evidence="3">
    <location>
        <position position="759"/>
    </location>
</feature>
<feature type="modified residue" description="Phosphothreonine" evidence="3">
    <location>
        <position position="761"/>
    </location>
</feature>
<feature type="glycosylation site" description="N-linked (GlcNAc...) asparagine" evidence="5">
    <location>
        <position position="50"/>
    </location>
</feature>
<feature type="glycosylation site" description="N-linked (GlcNAc...) asparagine" evidence="5">
    <location>
        <position position="116"/>
    </location>
</feature>
<feature type="glycosylation site" description="N-linked (GlcNAc...) asparagine" evidence="5">
    <location>
        <position position="254"/>
    </location>
</feature>
<feature type="glycosylation site" description="N-linked (GlcNAc...) asparagine" evidence="5">
    <location>
        <position position="501"/>
    </location>
</feature>
<feature type="glycosylation site" description="N-linked (GlcNAc...) asparagine" evidence="5">
    <location>
        <position position="642"/>
    </location>
</feature>
<feature type="disulfide bond" evidence="3">
    <location>
        <begin position="25"/>
        <end position="43"/>
    </location>
</feature>
<feature type="disulfide bond" evidence="3">
    <location>
        <begin position="33"/>
        <end position="447"/>
    </location>
</feature>
<feature type="disulfide bond" evidence="3">
    <location>
        <begin position="36"/>
        <end position="62"/>
    </location>
</feature>
<feature type="disulfide bond" evidence="3">
    <location>
        <begin position="46"/>
        <end position="73"/>
    </location>
</feature>
<feature type="disulfide bond" evidence="3">
    <location>
        <begin position="191"/>
        <end position="198"/>
    </location>
</feature>
<feature type="disulfide bond" evidence="3">
    <location>
        <begin position="246"/>
        <end position="286"/>
    </location>
</feature>
<feature type="disulfide bond" evidence="3">
    <location>
        <begin position="386"/>
        <end position="400"/>
    </location>
</feature>
<feature type="disulfide bond" evidence="3">
    <location>
        <begin position="420"/>
        <end position="445"/>
    </location>
</feature>
<feature type="disulfide bond" evidence="6">
    <location>
        <begin position="449"/>
        <end position="467"/>
    </location>
</feature>
<feature type="disulfide bond" evidence="6">
    <location>
        <begin position="459"/>
        <end position="470"/>
    </location>
</feature>
<feature type="disulfide bond" evidence="6">
    <location>
        <begin position="472"/>
        <end position="481"/>
    </location>
</feature>
<feature type="disulfide bond" evidence="6">
    <location>
        <begin position="483"/>
        <end position="514"/>
    </location>
</feature>
<feature type="disulfide bond" evidence="6">
    <location>
        <begin position="497"/>
        <end position="512"/>
    </location>
</feature>
<feature type="disulfide bond" evidence="6">
    <location>
        <begin position="506"/>
        <end position="517"/>
    </location>
</feature>
<feature type="disulfide bond" evidence="6">
    <location>
        <begin position="519"/>
        <end position="534"/>
    </location>
</feature>
<feature type="disulfide bond" evidence="6">
    <location>
        <begin position="536"/>
        <end position="559"/>
    </location>
</feature>
<feature type="disulfide bond" evidence="6">
    <location>
        <begin position="541"/>
        <end position="557"/>
    </location>
</feature>
<feature type="disulfide bond" evidence="6">
    <location>
        <begin position="549"/>
        <end position="562"/>
    </location>
</feature>
<feature type="disulfide bond" evidence="6">
    <location>
        <begin position="564"/>
        <end position="573"/>
    </location>
</feature>
<feature type="disulfide bond" evidence="6">
    <location>
        <begin position="575"/>
        <end position="598"/>
    </location>
</feature>
<feature type="disulfide bond" evidence="6">
    <location>
        <begin position="582"/>
        <end position="596"/>
    </location>
</feature>
<feature type="disulfide bond" evidence="6">
    <location>
        <begin position="590"/>
        <end position="601"/>
    </location>
</feature>
<feature type="disulfide bond" evidence="6">
    <location>
        <begin position="603"/>
        <end position="612"/>
    </location>
</feature>
<feature type="disulfide bond" evidence="3">
    <location>
        <begin position="615"/>
        <end position="618"/>
    </location>
</feature>
<feature type="disulfide bond" evidence="3">
    <location>
        <begin position="622"/>
        <end position="663"/>
    </location>
</feature>
<feature type="disulfide bond" evidence="3">
    <location>
        <begin position="628"/>
        <end position="647"/>
    </location>
</feature>
<feature type="disulfide bond" evidence="3">
    <location>
        <begin position="631"/>
        <end position="643"/>
    </location>
</feature>
<feature type="disulfide bond" evidence="3">
    <location>
        <begin position="671"/>
        <end position="696"/>
    </location>
</feature>
<comment type="function">
    <text evidence="3">Integrin ITGAL/ITGB2 is a receptor for ICAM1, ICAM2, ICAM3 and ICAM4. Integrin ITGAL/ITGB2 is also a receptor for the secreted form of ubiquitin-like protein ISG15; the interaction is mediated by ITGAL. Integrins ITGAM/ITGB2 and ITGAX/ITGB2 are receptors for the iC3b fragment of the third complement component and for fibrinogen. Integrin ITGAX/ITGB2 recognizes the sequence G-P-R in fibrinogen alpha-chain. Integrin ITGAM/ITGB2 recognizes P1 and P2 peptides of fibrinogen gamma chain. Integrin ITGAM/ITGB2 is also a receptor for factor X. Integrin ITGAD/ITGB2 is a receptor for ICAM3 and VCAM1. Contributes to natural killer cell cytotoxicity. Involved in leukocyte adhesion and transmigration of leukocytes including T-cells and neutrophils. Triggers neutrophil transmigration during lung injury through PTK2B/PYK2-mediated activation. Integrin ITGAL/ITGB2 in association with ICAM3, contributes to apoptotic neutrophil phagocytosis by macrophages. In association with alpha subunit ITGAM/CD11b, required for CD177-PRTN3-mediated activation of TNF primed neutrophils.</text>
</comment>
<comment type="subunit">
    <text evidence="3 4">Heterodimer of an alpha and a beta subunit. The ITGB2 beta subunit associates with the ITGAL, ITGAM, ITGAX or ITGAD alpha subunits. Found in a complex with CD177 and ITGAM/CD11b. Interacts with FGR. Interacts with COPS5 and RANBP9. Interacts with FLNA (via filamin repeats 4, 9, 12, 17, 19, 21, and 23). Interacts with THBD.</text>
</comment>
<comment type="subcellular location">
    <subcellularLocation>
        <location evidence="3">Cell membrane</location>
        <topology evidence="3">Single-pass type I membrane protein</topology>
    </subcellularLocation>
    <subcellularLocation>
        <location evidence="3">Membrane raft</location>
        <topology evidence="3">Single-pass type I membrane protein</topology>
    </subcellularLocation>
</comment>
<comment type="domain">
    <text evidence="3">The VWFA domain (or beta I domain) contains three cation-binding sites: the ligand-associated metal ion-binding site (LIMBS or SyMBS), the metal ion-dependent adhesion site (MIDAS), and the adjacent MIDAS site (ADMIDAS). This domain is also part of the ligand-binding site.</text>
</comment>
<comment type="PTM">
    <text evidence="3">Both Ser-746 and Ser-757 become phosphorylated when T-cells are exposed to phorbol esters. Phosphorylation on Thr-759 (but not on Ser-757) allows interaction with 14-3-3 proteins.</text>
</comment>
<comment type="similarity">
    <text evidence="7">Belongs to the integrin beta chain family.</text>
</comment>
<sequence length="770" mass="84488">MLPQRPQLLLLAGLLSLQSVLSQECTKYKVSTCRDCIESGPSCAWCQKLNFTGQGEPDSTRCDTRAQLLSKGCPADDIMEPKSLAETRQSQAGRQKQLSPEEVTLYLRPGQAAAFNVTFQRAKGYPIDLYYLMDLSYSMVDDLANVKKLGGDLLRALNDITESGRIGFGSFVDKTVLPFVNTHPEKLRNPCPNKEKECQPPFAFRHVLKLTDNSKQFETEVGKQLISGNLDAPEGGLDAMMQVAACPEEIGWRNVTRLLVFATDDGFHFAGDGKLGAILTPNDGRCHLEDNLYKSSNEFDYPSVGQLAHKLAESNIQPIFAVTKKMVKTYEKLTEIIPKSAVGELSEDSKNVVELIKSAYNKLSSRVFLDHNTLPDTLKVAYDSFCSNRVSQVDQPRGDCDGVQINVPITFQVKVTATECIQEQSFTIRALGFTDTVTVRVLPQCECQCREASRDRGVCGGRGSMECGVCRCDAGYIGKNCECQTHGRSSQELEGSCRKDNSSIICSGLGDCICGQCVCHTSDVPNKKIYGQFCECDNVNCERYDGQVCGGDKRGLCFCGACRCNDQYEGSACQCLKSTQGCLNLNGVECSGRGRCRCNVCQCDPGYQPPLCIDCPGCPVPCAGFAPCTECLKFDKGPFAKNCSAACGQTKLLSSPVPGGRKCKERDSEGCWMTYTLVQRDGRNRYDVHVDDMLECVKGPNIAAIVGGTVGGVVLVGILLLAIWKALTHLSDLREYHRFEKEKLKSQWNNDNPLFKSATTTVMNPKFAES</sequence>
<reference key="1">
    <citation type="journal article" date="2006" name="Vet. Immunol. Immunopathol.">
        <title>Cloning and comparison of bighorn sheep CD18 with that of domestic sheep, goats, cattle, humans and mice.</title>
        <authorList>
            <person name="Liu W."/>
            <person name="Brayton K.A."/>
            <person name="Lagerquist J."/>
            <person name="Foreyt W.J."/>
            <person name="Srikumaran S."/>
        </authorList>
    </citation>
    <scope>NUCLEOTIDE SEQUENCE [MRNA]</scope>
</reference>
<gene>
    <name type="primary">ITGB2</name>
    <name type="synonym">CD18</name>
</gene>